<accession>Q5HQM1</accession>
<protein>
    <recommendedName>
        <fullName evidence="1">Type II NADH:quinone oxidoreductase</fullName>
        <ecNumber evidence="1">1.6.5.9</ecNumber>
    </recommendedName>
    <alternativeName>
        <fullName evidence="1">NDH-2</fullName>
    </alternativeName>
</protein>
<sequence length="402" mass="44184">MAQDRKKVLVLGAGYAGLQTVTKLQKELSADAAEITLINKNEYHYESTWLHEASAGTINYEDLLYPVEKTVNKDKVNFVVAEVTKIDRNAKRVETDKGVYDFDILVVALGFVSETFGIDGMKEHAFQIENVLTSRKLSRHIEDKFANYAASKEKDDKDLSILVGGAGFTGIEFLGELTDRIPELCSKYGVDQSKVKLTCVEAAPKMLPMFSDDLVSYAVKYLEDRGVEFKIATPIVACNEKGFVVEVNGEKQQLEAGTSVWTAGVRGSHLMEESFEGVKRGRVINKQDLTIEGHNDIFVIGDCSAFIPAGEERPLPTTAQIAMQQGEHTASNIKRLLNGESTQDFQYVNRGTVCSLGANDGVGIVYGRDIAGKKAAFLKKVIDTRAIYKLGGIGLAFKKGKF</sequence>
<gene>
    <name type="ordered locus">SERP0527</name>
</gene>
<proteinExistence type="inferred from homology"/>
<reference key="1">
    <citation type="journal article" date="2005" name="J. Bacteriol.">
        <title>Insights on evolution of virulence and resistance from the complete genome analysis of an early methicillin-resistant Staphylococcus aureus strain and a biofilm-producing methicillin-resistant Staphylococcus epidermidis strain.</title>
        <authorList>
            <person name="Gill S.R."/>
            <person name="Fouts D.E."/>
            <person name="Archer G.L."/>
            <person name="Mongodin E.F."/>
            <person name="DeBoy R.T."/>
            <person name="Ravel J."/>
            <person name="Paulsen I.T."/>
            <person name="Kolonay J.F."/>
            <person name="Brinkac L.M."/>
            <person name="Beanan M.J."/>
            <person name="Dodson R.J."/>
            <person name="Daugherty S.C."/>
            <person name="Madupu R."/>
            <person name="Angiuoli S.V."/>
            <person name="Durkin A.S."/>
            <person name="Haft D.H."/>
            <person name="Vamathevan J.J."/>
            <person name="Khouri H."/>
            <person name="Utterback T.R."/>
            <person name="Lee C."/>
            <person name="Dimitrov G."/>
            <person name="Jiang L."/>
            <person name="Qin H."/>
            <person name="Weidman J."/>
            <person name="Tran K."/>
            <person name="Kang K.H."/>
            <person name="Hance I.R."/>
            <person name="Nelson K.E."/>
            <person name="Fraser C.M."/>
        </authorList>
    </citation>
    <scope>NUCLEOTIDE SEQUENCE [LARGE SCALE GENOMIC DNA]</scope>
    <source>
        <strain>ATCC 35984 / DSM 28319 / BCRC 17069 / CCUG 31568 / BM 3577 / RP62A</strain>
    </source>
</reference>
<evidence type="ECO:0000250" key="1">
    <source>
        <dbReference type="UniProtKB" id="Q2FZV7"/>
    </source>
</evidence>
<evidence type="ECO:0000305" key="2"/>
<keyword id="KW-1003">Cell membrane</keyword>
<keyword id="KW-0274">FAD</keyword>
<keyword id="KW-0285">Flavoprotein</keyword>
<keyword id="KW-0472">Membrane</keyword>
<keyword id="KW-0520">NAD</keyword>
<keyword id="KW-0560">Oxidoreductase</keyword>
<keyword id="KW-1185">Reference proteome</keyword>
<feature type="chain" id="PRO_0000287374" description="Type II NADH:quinone oxidoreductase">
    <location>
        <begin position="1"/>
        <end position="402"/>
    </location>
</feature>
<feature type="active site" evidence="1">
    <location>
        <position position="172"/>
    </location>
</feature>
<feature type="binding site" evidence="1">
    <location>
        <begin position="12"/>
        <end position="16"/>
    </location>
    <ligand>
        <name>FAD</name>
        <dbReference type="ChEBI" id="CHEBI:57692"/>
    </ligand>
</feature>
<feature type="binding site" evidence="1">
    <location>
        <begin position="39"/>
        <end position="40"/>
    </location>
    <ligand>
        <name>FAD</name>
        <dbReference type="ChEBI" id="CHEBI:57692"/>
    </ligand>
</feature>
<feature type="binding site" evidence="1">
    <location>
        <position position="83"/>
    </location>
    <ligand>
        <name>FAD</name>
        <dbReference type="ChEBI" id="CHEBI:57692"/>
    </ligand>
</feature>
<feature type="binding site" evidence="1">
    <location>
        <position position="302"/>
    </location>
    <ligand>
        <name>FAD</name>
        <dbReference type="ChEBI" id="CHEBI:57692"/>
    </ligand>
</feature>
<feature type="binding site" evidence="1">
    <location>
        <begin position="319"/>
        <end position="320"/>
    </location>
    <ligand>
        <name>FAD</name>
        <dbReference type="ChEBI" id="CHEBI:57692"/>
    </ligand>
</feature>
<feature type="binding site" evidence="1">
    <location>
        <position position="379"/>
    </location>
    <ligand>
        <name>FAD</name>
        <dbReference type="ChEBI" id="CHEBI:57692"/>
    </ligand>
</feature>
<name>NDH_STAEQ</name>
<organism>
    <name type="scientific">Staphylococcus epidermidis (strain ATCC 35984 / DSM 28319 / BCRC 17069 / CCUG 31568 / BM 3577 / RP62A)</name>
    <dbReference type="NCBI Taxonomy" id="176279"/>
    <lineage>
        <taxon>Bacteria</taxon>
        <taxon>Bacillati</taxon>
        <taxon>Bacillota</taxon>
        <taxon>Bacilli</taxon>
        <taxon>Bacillales</taxon>
        <taxon>Staphylococcaceae</taxon>
        <taxon>Staphylococcus</taxon>
    </lineage>
</organism>
<dbReference type="EC" id="1.6.5.9" evidence="1"/>
<dbReference type="EMBL" id="CP000029">
    <property type="protein sequence ID" value="AAW53923.1"/>
    <property type="molecule type" value="Genomic_DNA"/>
</dbReference>
<dbReference type="RefSeq" id="WP_002485996.1">
    <property type="nucleotide sequence ID" value="NC_002976.3"/>
</dbReference>
<dbReference type="SMR" id="Q5HQM1"/>
<dbReference type="STRING" id="176279.SERP0527"/>
<dbReference type="KEGG" id="ser:SERP0527"/>
<dbReference type="eggNOG" id="COG1252">
    <property type="taxonomic scope" value="Bacteria"/>
</dbReference>
<dbReference type="HOGENOM" id="CLU_021377_7_2_9"/>
<dbReference type="Proteomes" id="UP000000531">
    <property type="component" value="Chromosome"/>
</dbReference>
<dbReference type="GO" id="GO:0005886">
    <property type="term" value="C:plasma membrane"/>
    <property type="evidence" value="ECO:0007669"/>
    <property type="project" value="UniProtKB-SubCell"/>
</dbReference>
<dbReference type="GO" id="GO:0003955">
    <property type="term" value="F:NAD(P)H dehydrogenase (quinone) activity"/>
    <property type="evidence" value="ECO:0007669"/>
    <property type="project" value="TreeGrafter"/>
</dbReference>
<dbReference type="GO" id="GO:0050136">
    <property type="term" value="F:NADH:ubiquinone reductase (non-electrogenic) activity"/>
    <property type="evidence" value="ECO:0007669"/>
    <property type="project" value="UniProtKB-EC"/>
</dbReference>
<dbReference type="GO" id="GO:0019646">
    <property type="term" value="P:aerobic electron transport chain"/>
    <property type="evidence" value="ECO:0007669"/>
    <property type="project" value="TreeGrafter"/>
</dbReference>
<dbReference type="Gene3D" id="3.50.50.100">
    <property type="match status" value="1"/>
</dbReference>
<dbReference type="InterPro" id="IPR036188">
    <property type="entry name" value="FAD/NAD-bd_sf"/>
</dbReference>
<dbReference type="InterPro" id="IPR023753">
    <property type="entry name" value="FAD/NAD-binding_dom"/>
</dbReference>
<dbReference type="InterPro" id="IPR051169">
    <property type="entry name" value="NADH-Q_oxidoreductase"/>
</dbReference>
<dbReference type="PANTHER" id="PTHR42913:SF3">
    <property type="entry name" value="64 KDA MITOCHONDRIAL NADH DEHYDROGENASE (EUROFUNG)"/>
    <property type="match status" value="1"/>
</dbReference>
<dbReference type="PANTHER" id="PTHR42913">
    <property type="entry name" value="APOPTOSIS-INDUCING FACTOR 1"/>
    <property type="match status" value="1"/>
</dbReference>
<dbReference type="Pfam" id="PF07992">
    <property type="entry name" value="Pyr_redox_2"/>
    <property type="match status" value="1"/>
</dbReference>
<dbReference type="SUPFAM" id="SSF51905">
    <property type="entry name" value="FAD/NAD(P)-binding domain"/>
    <property type="match status" value="2"/>
</dbReference>
<comment type="function">
    <text evidence="1">Alternative, nonproton pumping NADH:quinone oxidoreductase that delivers electrons to the respiratory chain by oxidation of NADH and reduction of quinones, and contributes to the regeneration of NAD(+).</text>
</comment>
<comment type="catalytic activity">
    <reaction evidence="1">
        <text>a quinone + NADH + H(+) = a quinol + NAD(+)</text>
        <dbReference type="Rhea" id="RHEA:46160"/>
        <dbReference type="ChEBI" id="CHEBI:15378"/>
        <dbReference type="ChEBI" id="CHEBI:24646"/>
        <dbReference type="ChEBI" id="CHEBI:57540"/>
        <dbReference type="ChEBI" id="CHEBI:57945"/>
        <dbReference type="ChEBI" id="CHEBI:132124"/>
        <dbReference type="EC" id="1.6.5.9"/>
    </reaction>
</comment>
<comment type="cofactor">
    <cofactor evidence="1">
        <name>FAD</name>
        <dbReference type="ChEBI" id="CHEBI:57692"/>
    </cofactor>
    <text evidence="1">Binds 1 FAD per subunit.</text>
</comment>
<comment type="subcellular location">
    <subcellularLocation>
        <location evidence="1">Cell membrane</location>
    </subcellularLocation>
</comment>
<comment type="similarity">
    <text evidence="2">Belongs to the NADH dehydrogenase family.</text>
</comment>